<dbReference type="EMBL" id="BT021580">
    <property type="protein sequence ID" value="AAX46427.1"/>
    <property type="molecule type" value="mRNA"/>
</dbReference>
<dbReference type="RefSeq" id="NP_001030495.1">
    <property type="nucleotide sequence ID" value="NM_001035418.1"/>
</dbReference>
<dbReference type="RefSeq" id="XP_015317209.1">
    <property type="nucleotide sequence ID" value="XM_015461723.3"/>
</dbReference>
<dbReference type="BMRB" id="Q58DL7"/>
<dbReference type="SMR" id="Q58DL7"/>
<dbReference type="FunCoup" id="Q58DL7">
    <property type="interactions" value="1089"/>
</dbReference>
<dbReference type="STRING" id="9913.ENSBTAP00000070842"/>
<dbReference type="PaxDb" id="9913-ENSBTAP00000016923"/>
<dbReference type="GeneID" id="537718"/>
<dbReference type="KEGG" id="bta:537718"/>
<dbReference type="CTD" id="23229"/>
<dbReference type="eggNOG" id="KOG3519">
    <property type="taxonomic scope" value="Eukaryota"/>
</dbReference>
<dbReference type="HOGENOM" id="CLU_008436_2_1_1"/>
<dbReference type="InParanoid" id="Q58DL7"/>
<dbReference type="OrthoDB" id="660555at2759"/>
<dbReference type="TreeFam" id="TF316832"/>
<dbReference type="Proteomes" id="UP000009136">
    <property type="component" value="Unplaced"/>
</dbReference>
<dbReference type="GO" id="GO:0005829">
    <property type="term" value="C:cytosol"/>
    <property type="evidence" value="ECO:0000318"/>
    <property type="project" value="GO_Central"/>
</dbReference>
<dbReference type="GO" id="GO:0098982">
    <property type="term" value="C:GABA-ergic synapse"/>
    <property type="evidence" value="ECO:0000318"/>
    <property type="project" value="GO_Central"/>
</dbReference>
<dbReference type="GO" id="GO:0014069">
    <property type="term" value="C:postsynaptic density"/>
    <property type="evidence" value="ECO:0000250"/>
    <property type="project" value="UniProtKB"/>
</dbReference>
<dbReference type="GO" id="GO:0099572">
    <property type="term" value="C:postsynaptic specialization"/>
    <property type="evidence" value="ECO:0000318"/>
    <property type="project" value="GO_Central"/>
</dbReference>
<dbReference type="GO" id="GO:0005085">
    <property type="term" value="F:guanyl-nucleotide exchange factor activity"/>
    <property type="evidence" value="ECO:0000318"/>
    <property type="project" value="GO_Central"/>
</dbReference>
<dbReference type="GO" id="GO:0099150">
    <property type="term" value="P:regulation of postsynaptic specialization assembly"/>
    <property type="evidence" value="ECO:0000318"/>
    <property type="project" value="GO_Central"/>
</dbReference>
<dbReference type="CDD" id="cd01224">
    <property type="entry name" value="PH_Collybistin_ASEF"/>
    <property type="match status" value="1"/>
</dbReference>
<dbReference type="CDD" id="cd00160">
    <property type="entry name" value="RhoGEF"/>
    <property type="match status" value="1"/>
</dbReference>
<dbReference type="CDD" id="cd11975">
    <property type="entry name" value="SH3_ARHGEF9"/>
    <property type="match status" value="1"/>
</dbReference>
<dbReference type="FunFam" id="1.20.900.10:FF:000002">
    <property type="entry name" value="Rho guanine nucleotide exchange factor 9"/>
    <property type="match status" value="1"/>
</dbReference>
<dbReference type="FunFam" id="2.30.29.30:FF:000015">
    <property type="entry name" value="Rho guanine nucleotide exchange factor 9"/>
    <property type="match status" value="1"/>
</dbReference>
<dbReference type="FunFam" id="2.30.30.40:FF:000037">
    <property type="entry name" value="Rho guanine nucleotide exchange factor 9"/>
    <property type="match status" value="1"/>
</dbReference>
<dbReference type="Gene3D" id="1.20.900.10">
    <property type="entry name" value="Dbl homology (DH) domain"/>
    <property type="match status" value="1"/>
</dbReference>
<dbReference type="Gene3D" id="2.30.29.30">
    <property type="entry name" value="Pleckstrin-homology domain (PH domain)/Phosphotyrosine-binding domain (PTB)"/>
    <property type="match status" value="1"/>
</dbReference>
<dbReference type="Gene3D" id="2.30.30.40">
    <property type="entry name" value="SH3 Domains"/>
    <property type="match status" value="1"/>
</dbReference>
<dbReference type="InterPro" id="IPR035728">
    <property type="entry name" value="ARHGEF9_SH3"/>
</dbReference>
<dbReference type="InterPro" id="IPR035899">
    <property type="entry name" value="DBL_dom_sf"/>
</dbReference>
<dbReference type="InterPro" id="IPR000219">
    <property type="entry name" value="DH_dom"/>
</dbReference>
<dbReference type="InterPro" id="IPR011993">
    <property type="entry name" value="PH-like_dom_sf"/>
</dbReference>
<dbReference type="InterPro" id="IPR001849">
    <property type="entry name" value="PH_domain"/>
</dbReference>
<dbReference type="InterPro" id="IPR036028">
    <property type="entry name" value="SH3-like_dom_sf"/>
</dbReference>
<dbReference type="InterPro" id="IPR001452">
    <property type="entry name" value="SH3_domain"/>
</dbReference>
<dbReference type="InterPro" id="IPR055251">
    <property type="entry name" value="SOS1_NGEF_PH"/>
</dbReference>
<dbReference type="PANTHER" id="PTHR47544">
    <property type="entry name" value="RHO GUANINE NUCLEOTIDE EXCHANGE FACTOR 4"/>
    <property type="match status" value="1"/>
</dbReference>
<dbReference type="PANTHER" id="PTHR47544:SF4">
    <property type="entry name" value="RHO GUANINE NUCLEOTIDE EXCHANGE FACTOR 9"/>
    <property type="match status" value="1"/>
</dbReference>
<dbReference type="Pfam" id="PF00621">
    <property type="entry name" value="RhoGEF"/>
    <property type="match status" value="1"/>
</dbReference>
<dbReference type="Pfam" id="PF07653">
    <property type="entry name" value="SH3_2"/>
    <property type="match status" value="1"/>
</dbReference>
<dbReference type="Pfam" id="PF22697">
    <property type="entry name" value="SOS1_NGEF_PH"/>
    <property type="match status" value="1"/>
</dbReference>
<dbReference type="SMART" id="SM00233">
    <property type="entry name" value="PH"/>
    <property type="match status" value="1"/>
</dbReference>
<dbReference type="SMART" id="SM00325">
    <property type="entry name" value="RhoGEF"/>
    <property type="match status" value="1"/>
</dbReference>
<dbReference type="SMART" id="SM00326">
    <property type="entry name" value="SH3"/>
    <property type="match status" value="1"/>
</dbReference>
<dbReference type="SUPFAM" id="SSF48065">
    <property type="entry name" value="DBL homology domain (DH-domain)"/>
    <property type="match status" value="1"/>
</dbReference>
<dbReference type="SUPFAM" id="SSF50729">
    <property type="entry name" value="PH domain-like"/>
    <property type="match status" value="1"/>
</dbReference>
<dbReference type="SUPFAM" id="SSF50044">
    <property type="entry name" value="SH3-domain"/>
    <property type="match status" value="1"/>
</dbReference>
<dbReference type="PROSITE" id="PS50010">
    <property type="entry name" value="DH_2"/>
    <property type="match status" value="1"/>
</dbReference>
<dbReference type="PROSITE" id="PS50003">
    <property type="entry name" value="PH_DOMAIN"/>
    <property type="match status" value="1"/>
</dbReference>
<dbReference type="PROSITE" id="PS50002">
    <property type="entry name" value="SH3"/>
    <property type="match status" value="1"/>
</dbReference>
<organism>
    <name type="scientific">Bos taurus</name>
    <name type="common">Bovine</name>
    <dbReference type="NCBI Taxonomy" id="9913"/>
    <lineage>
        <taxon>Eukaryota</taxon>
        <taxon>Metazoa</taxon>
        <taxon>Chordata</taxon>
        <taxon>Craniata</taxon>
        <taxon>Vertebrata</taxon>
        <taxon>Euteleostomi</taxon>
        <taxon>Mammalia</taxon>
        <taxon>Eutheria</taxon>
        <taxon>Laurasiatheria</taxon>
        <taxon>Artiodactyla</taxon>
        <taxon>Ruminantia</taxon>
        <taxon>Pecora</taxon>
        <taxon>Bovidae</taxon>
        <taxon>Bovinae</taxon>
        <taxon>Bos</taxon>
    </lineage>
</organism>
<feature type="chain" id="PRO_0000253894" description="Rho guanine nucleotide exchange factor 9">
    <location>
        <begin position="1"/>
        <end position="561"/>
    </location>
</feature>
<feature type="domain" description="SH3" evidence="6">
    <location>
        <begin position="53"/>
        <end position="112"/>
    </location>
</feature>
<feature type="domain" description="DH" evidence="4">
    <location>
        <begin position="148"/>
        <end position="332"/>
    </location>
</feature>
<feature type="domain" description="PH" evidence="5">
    <location>
        <begin position="363"/>
        <end position="470"/>
    </location>
</feature>
<feature type="region of interest" description="Interaction with GPHN" evidence="1">
    <location>
        <begin position="145"/>
        <end position="155"/>
    </location>
</feature>
<feature type="region of interest" description="Disordered" evidence="7">
    <location>
        <begin position="499"/>
        <end position="524"/>
    </location>
</feature>
<feature type="modified residue" description="Phosphoserine" evidence="2">
    <location>
        <position position="547"/>
    </location>
</feature>
<gene>
    <name type="primary">ARHGEF9</name>
</gene>
<reference key="1">
    <citation type="journal article" date="2005" name="BMC Genomics">
        <title>Characterization of 954 bovine full-CDS cDNA sequences.</title>
        <authorList>
            <person name="Harhay G.P."/>
            <person name="Sonstegard T.S."/>
            <person name="Keele J.W."/>
            <person name="Heaton M.P."/>
            <person name="Clawson M.L."/>
            <person name="Snelling W.M."/>
            <person name="Wiedmann R.T."/>
            <person name="Van Tassell C.P."/>
            <person name="Smith T.P.L."/>
        </authorList>
    </citation>
    <scope>NUCLEOTIDE SEQUENCE [LARGE SCALE MRNA]</scope>
</reference>
<evidence type="ECO:0000250" key="1"/>
<evidence type="ECO:0000250" key="2">
    <source>
        <dbReference type="UniProtKB" id="Q3UTH8"/>
    </source>
</evidence>
<evidence type="ECO:0000250" key="3">
    <source>
        <dbReference type="UniProtKB" id="Q9QX73"/>
    </source>
</evidence>
<evidence type="ECO:0000255" key="4">
    <source>
        <dbReference type="PROSITE-ProRule" id="PRU00062"/>
    </source>
</evidence>
<evidence type="ECO:0000255" key="5">
    <source>
        <dbReference type="PROSITE-ProRule" id="PRU00145"/>
    </source>
</evidence>
<evidence type="ECO:0000255" key="6">
    <source>
        <dbReference type="PROSITE-ProRule" id="PRU00192"/>
    </source>
</evidence>
<evidence type="ECO:0000256" key="7">
    <source>
        <dbReference type="SAM" id="MobiDB-lite"/>
    </source>
</evidence>
<accession>Q58DL7</accession>
<name>ARHG9_BOVIN</name>
<keyword id="KW-0963">Cytoplasm</keyword>
<keyword id="KW-0344">Guanine-nucleotide releasing factor</keyword>
<keyword id="KW-0597">Phosphoprotein</keyword>
<keyword id="KW-1185">Reference proteome</keyword>
<keyword id="KW-0728">SH3 domain</keyword>
<keyword id="KW-0770">Synapse</keyword>
<protein>
    <recommendedName>
        <fullName>Rho guanine nucleotide exchange factor 9</fullName>
    </recommendedName>
    <alternativeName>
        <fullName>Collybistin</fullName>
    </alternativeName>
    <alternativeName>
        <fullName>Rac/Cdc42 guanine nucleotide exchange factor 9</fullName>
    </alternativeName>
</protein>
<comment type="function">
    <text evidence="3">Acts as a guanine nucleotide exchange factor (GEF) for CDC42. Promotes formation of GPHN clusters (By similarity).</text>
</comment>
<comment type="subunit">
    <text evidence="3">Interacts with GPHN.</text>
</comment>
<comment type="subcellular location">
    <subcellularLocation>
        <location evidence="3">Cytoplasm</location>
    </subcellularLocation>
    <subcellularLocation>
        <location evidence="2">Postsynaptic density</location>
    </subcellularLocation>
</comment>
<proteinExistence type="evidence at transcript level"/>
<sequence length="561" mass="65980">MELDQVGWRRSRKLCTDNLDQGSKTLETCKNIGGYFKPQGPGTEHINELITGDSIVSAEAVWDHVTMANRELAFKAGDVIKVLDASNKDWWWGQIDDEEGWFPASFVRLWVNQEDGVEEGPSDVQNGHLDPNSDCLCLGRPLQNRDQMRANVINEIMSTERHYIKHLKDICEGYLKQCRKRRDMFSDEQLKVIFGNIEDIYRFQMGFVRDLEKQYNNDDPHLSEIGPCFLEHQDGFWIYSEYCNNHLDACMELSKLMKDSRYQHFFEACRLLQQMIDIAIDGFLLTPVQKICKYPLQLAELLKYTAQDHSDYRYVAAALAVMRNVTQQINERKRRLENIDKIAQWQASVLDWEGEDILDRSSELIYTGEMAWIYQPYGRNQQRVFFLFDHQMVLCKKDLIRRDILYYKGRIDMDKYEVVDIEDGRDDDFNVSMKNAFKLHNKETEEIHLFFAKKLEEKIRWLRAFREERKMVQEDEKIGFEISENQKRQAAMTVRKVSKQKGVNSARSVPPSYPPPQDPLNQGQYLVPDGIAQSQVFEFTEPKRSQSPFWQNFSRLTPFKK</sequence>